<organism>
    <name type="scientific">Staphylococcus aureus (strain NCTC 8325 / PS 47)</name>
    <dbReference type="NCBI Taxonomy" id="93061"/>
    <lineage>
        <taxon>Bacteria</taxon>
        <taxon>Bacillati</taxon>
        <taxon>Bacillota</taxon>
        <taxon>Bacilli</taxon>
        <taxon>Bacillales</taxon>
        <taxon>Staphylococcaceae</taxon>
        <taxon>Staphylococcus</taxon>
    </lineage>
</organism>
<comment type="function">
    <text evidence="1">One of the primary rRNA binding proteins, it binds directly to 16S rRNA central domain where it helps coordinate assembly of the platform of the 30S subunit.</text>
</comment>
<comment type="subunit">
    <text evidence="1">Part of the 30S ribosomal subunit. Contacts proteins S5 and S12.</text>
</comment>
<comment type="similarity">
    <text evidence="1">Belongs to the universal ribosomal protein uS8 family.</text>
</comment>
<gene>
    <name evidence="1" type="primary">rpsH</name>
    <name type="ordered locus">SAOUHSC_02498</name>
</gene>
<proteinExistence type="evidence at protein level"/>
<keyword id="KW-0002">3D-structure</keyword>
<keyword id="KW-1185">Reference proteome</keyword>
<keyword id="KW-0687">Ribonucleoprotein</keyword>
<keyword id="KW-0689">Ribosomal protein</keyword>
<keyword id="KW-0694">RNA-binding</keyword>
<keyword id="KW-0699">rRNA-binding</keyword>
<feature type="chain" id="PRO_0000290938" description="Small ribosomal subunit protein uS8">
    <location>
        <begin position="1"/>
        <end position="132"/>
    </location>
</feature>
<feature type="helix" evidence="3">
    <location>
        <begin position="6"/>
        <end position="19"/>
    </location>
</feature>
<feature type="strand" evidence="3">
    <location>
        <begin position="23"/>
        <end position="28"/>
    </location>
</feature>
<feature type="helix" evidence="3">
    <location>
        <begin position="31"/>
        <end position="43"/>
    </location>
</feature>
<feature type="strand" evidence="3">
    <location>
        <begin position="45"/>
        <end position="52"/>
    </location>
</feature>
<feature type="strand" evidence="3">
    <location>
        <begin position="55"/>
        <end position="57"/>
    </location>
</feature>
<feature type="strand" evidence="3">
    <location>
        <begin position="59"/>
        <end position="64"/>
    </location>
</feature>
<feature type="strand" evidence="3">
    <location>
        <begin position="76"/>
        <end position="79"/>
    </location>
</feature>
<feature type="turn" evidence="3">
    <location>
        <begin position="91"/>
        <end position="93"/>
    </location>
</feature>
<feature type="helix" evidence="3">
    <location>
        <begin position="97"/>
        <end position="100"/>
    </location>
</feature>
<feature type="strand" evidence="3">
    <location>
        <begin position="102"/>
        <end position="108"/>
    </location>
</feature>
<feature type="strand" evidence="3">
    <location>
        <begin position="111"/>
        <end position="113"/>
    </location>
</feature>
<feature type="helix" evidence="3">
    <location>
        <begin position="115"/>
        <end position="120"/>
    </location>
</feature>
<feature type="strand" evidence="3">
    <location>
        <begin position="125"/>
        <end position="132"/>
    </location>
</feature>
<evidence type="ECO:0000255" key="1">
    <source>
        <dbReference type="HAMAP-Rule" id="MF_01302"/>
    </source>
</evidence>
<evidence type="ECO:0000305" key="2"/>
<evidence type="ECO:0007829" key="3">
    <source>
        <dbReference type="PDB" id="8BYV"/>
    </source>
</evidence>
<sequence>MTMTDPIADMLTRVRNANMVRHEKLELPASNIKKEIAEILKSEGFIKNVEYVEDDKQGVLRLFLKYGQNDERVITGLKRISKPGLRVYAKASEMPKVLNGLGIALVSTSEGVITDKEARKRNVGGEIIAYVW</sequence>
<protein>
    <recommendedName>
        <fullName evidence="1">Small ribosomal subunit protein uS8</fullName>
    </recommendedName>
    <alternativeName>
        <fullName evidence="2">30S ribosomal protein S8</fullName>
    </alternativeName>
</protein>
<name>RS8_STAA8</name>
<accession>Q2FW20</accession>
<dbReference type="EMBL" id="CP000253">
    <property type="protein sequence ID" value="ABD31516.1"/>
    <property type="molecule type" value="Genomic_DNA"/>
</dbReference>
<dbReference type="RefSeq" id="WP_000178881.1">
    <property type="nucleotide sequence ID" value="NZ_LS483365.1"/>
</dbReference>
<dbReference type="RefSeq" id="YP_500965.1">
    <property type="nucleotide sequence ID" value="NC_007795.1"/>
</dbReference>
<dbReference type="PDB" id="5LI0">
    <property type="method" value="EM"/>
    <property type="resolution" value="3.80 A"/>
    <property type="chains" value="h=2-132"/>
</dbReference>
<dbReference type="PDB" id="5ND8">
    <property type="method" value="EM"/>
    <property type="resolution" value="3.70 A"/>
    <property type="chains" value="h=1-132"/>
</dbReference>
<dbReference type="PDB" id="5ND9">
    <property type="method" value="EM"/>
    <property type="resolution" value="3.70 A"/>
    <property type="chains" value="h=1-132"/>
</dbReference>
<dbReference type="PDB" id="5TCU">
    <property type="method" value="EM"/>
    <property type="resolution" value="3.90 A"/>
    <property type="chains" value="SF=3-132"/>
</dbReference>
<dbReference type="PDB" id="6YEF">
    <property type="method" value="EM"/>
    <property type="resolution" value="3.20 A"/>
    <property type="chains" value="h=1-132"/>
</dbReference>
<dbReference type="PDB" id="7BGD">
    <property type="method" value="EM"/>
    <property type="resolution" value="3.20 A"/>
    <property type="chains" value="h=1-132"/>
</dbReference>
<dbReference type="PDB" id="7KWG">
    <property type="method" value="EM"/>
    <property type="resolution" value="3.75 A"/>
    <property type="chains" value="h=1-132"/>
</dbReference>
<dbReference type="PDB" id="7NHL">
    <property type="method" value="EM"/>
    <property type="resolution" value="3.10 A"/>
    <property type="chains" value="i=1-132"/>
</dbReference>
<dbReference type="PDB" id="7NHM">
    <property type="method" value="EM"/>
    <property type="resolution" value="3.10 A"/>
    <property type="chains" value="i=1-132"/>
</dbReference>
<dbReference type="PDB" id="8BH6">
    <property type="method" value="EM"/>
    <property type="resolution" value="3.70 A"/>
    <property type="chains" value="h=1-132"/>
</dbReference>
<dbReference type="PDB" id="8BH7">
    <property type="method" value="EM"/>
    <property type="resolution" value="4.23 A"/>
    <property type="chains" value="h=1-132"/>
</dbReference>
<dbReference type="PDB" id="8BYV">
    <property type="method" value="EM"/>
    <property type="resolution" value="2.89 A"/>
    <property type="chains" value="h=1-132"/>
</dbReference>
<dbReference type="PDB" id="8P2F">
    <property type="method" value="EM"/>
    <property type="resolution" value="2.44 A"/>
    <property type="chains" value="i=1-132"/>
</dbReference>
<dbReference type="PDB" id="8P2G">
    <property type="method" value="EM"/>
    <property type="resolution" value="2.02 A"/>
    <property type="chains" value="i=1-132"/>
</dbReference>
<dbReference type="PDB" id="8P2H">
    <property type="method" value="EM"/>
    <property type="resolution" value="2.49 A"/>
    <property type="chains" value="i=1-132"/>
</dbReference>
<dbReference type="PDBsum" id="5LI0"/>
<dbReference type="PDBsum" id="5ND8"/>
<dbReference type="PDBsum" id="5ND9"/>
<dbReference type="PDBsum" id="5TCU"/>
<dbReference type="PDBsum" id="6YEF"/>
<dbReference type="PDBsum" id="7BGD"/>
<dbReference type="PDBsum" id="7KWG"/>
<dbReference type="PDBsum" id="7NHL"/>
<dbReference type="PDBsum" id="7NHM"/>
<dbReference type="PDBsum" id="8BH6"/>
<dbReference type="PDBsum" id="8BH7"/>
<dbReference type="PDBsum" id="8BYV"/>
<dbReference type="PDBsum" id="8P2F"/>
<dbReference type="PDBsum" id="8P2G"/>
<dbReference type="PDBsum" id="8P2H"/>
<dbReference type="EMDB" id="EMD-10791"/>
<dbReference type="EMDB" id="EMD-12178"/>
<dbReference type="EMDB" id="EMD-12332"/>
<dbReference type="EMDB" id="EMD-12333"/>
<dbReference type="EMDB" id="EMD-16048"/>
<dbReference type="EMDB" id="EMD-16049"/>
<dbReference type="EMDB" id="EMD-16334"/>
<dbReference type="EMDB" id="EMD-17363"/>
<dbReference type="EMDB" id="EMD-17364"/>
<dbReference type="EMDB" id="EMD-17365"/>
<dbReference type="EMDB" id="EMD-23052"/>
<dbReference type="EMDB" id="EMD-3624"/>
<dbReference type="EMDB" id="EMD-3625"/>
<dbReference type="EMDB" id="EMD-4050"/>
<dbReference type="EMDB" id="EMD-8402"/>
<dbReference type="SMR" id="Q2FW20"/>
<dbReference type="IntAct" id="Q2FW20">
    <property type="interactions" value="1"/>
</dbReference>
<dbReference type="STRING" id="93061.SAOUHSC_02498"/>
<dbReference type="PaxDb" id="1280-SAXN108_2486"/>
<dbReference type="GeneID" id="3920874"/>
<dbReference type="GeneID" id="98346548"/>
<dbReference type="KEGG" id="sao:SAOUHSC_02498"/>
<dbReference type="PATRIC" id="fig|93061.5.peg.2253"/>
<dbReference type="eggNOG" id="COG0096">
    <property type="taxonomic scope" value="Bacteria"/>
</dbReference>
<dbReference type="HOGENOM" id="CLU_098428_0_2_9"/>
<dbReference type="OrthoDB" id="9802617at2"/>
<dbReference type="PRO" id="PR:Q2FW20"/>
<dbReference type="Proteomes" id="UP000008816">
    <property type="component" value="Chromosome"/>
</dbReference>
<dbReference type="GO" id="GO:0022627">
    <property type="term" value="C:cytosolic small ribosomal subunit"/>
    <property type="evidence" value="ECO:0000318"/>
    <property type="project" value="GO_Central"/>
</dbReference>
<dbReference type="GO" id="GO:0019843">
    <property type="term" value="F:rRNA binding"/>
    <property type="evidence" value="ECO:0007669"/>
    <property type="project" value="UniProtKB-UniRule"/>
</dbReference>
<dbReference type="GO" id="GO:0003735">
    <property type="term" value="F:structural constituent of ribosome"/>
    <property type="evidence" value="ECO:0000318"/>
    <property type="project" value="GO_Central"/>
</dbReference>
<dbReference type="GO" id="GO:0006412">
    <property type="term" value="P:translation"/>
    <property type="evidence" value="ECO:0007669"/>
    <property type="project" value="UniProtKB-UniRule"/>
</dbReference>
<dbReference type="FunFam" id="3.30.1370.30:FF:000002">
    <property type="entry name" value="30S ribosomal protein S8"/>
    <property type="match status" value="1"/>
</dbReference>
<dbReference type="FunFam" id="3.30.1490.10:FF:000001">
    <property type="entry name" value="30S ribosomal protein S8"/>
    <property type="match status" value="1"/>
</dbReference>
<dbReference type="Gene3D" id="3.30.1370.30">
    <property type="match status" value="1"/>
</dbReference>
<dbReference type="Gene3D" id="3.30.1490.10">
    <property type="match status" value="1"/>
</dbReference>
<dbReference type="HAMAP" id="MF_01302_B">
    <property type="entry name" value="Ribosomal_uS8_B"/>
    <property type="match status" value="1"/>
</dbReference>
<dbReference type="InterPro" id="IPR000630">
    <property type="entry name" value="Ribosomal_uS8"/>
</dbReference>
<dbReference type="InterPro" id="IPR047863">
    <property type="entry name" value="Ribosomal_uS8_CS"/>
</dbReference>
<dbReference type="InterPro" id="IPR035987">
    <property type="entry name" value="Ribosomal_uS8_sf"/>
</dbReference>
<dbReference type="NCBIfam" id="NF001109">
    <property type="entry name" value="PRK00136.1"/>
    <property type="match status" value="1"/>
</dbReference>
<dbReference type="PANTHER" id="PTHR11758">
    <property type="entry name" value="40S RIBOSOMAL PROTEIN S15A"/>
    <property type="match status" value="1"/>
</dbReference>
<dbReference type="Pfam" id="PF00410">
    <property type="entry name" value="Ribosomal_S8"/>
    <property type="match status" value="1"/>
</dbReference>
<dbReference type="SUPFAM" id="SSF56047">
    <property type="entry name" value="Ribosomal protein S8"/>
    <property type="match status" value="1"/>
</dbReference>
<dbReference type="PROSITE" id="PS00053">
    <property type="entry name" value="RIBOSOMAL_S8"/>
    <property type="match status" value="1"/>
</dbReference>
<reference key="1">
    <citation type="book" date="2006" name="Gram positive pathogens, 2nd edition">
        <title>The Staphylococcus aureus NCTC 8325 genome.</title>
        <editorList>
            <person name="Fischetti V."/>
            <person name="Novick R."/>
            <person name="Ferretti J."/>
            <person name="Portnoy D."/>
            <person name="Rood J."/>
        </editorList>
        <authorList>
            <person name="Gillaspy A.F."/>
            <person name="Worrell V."/>
            <person name="Orvis J."/>
            <person name="Roe B.A."/>
            <person name="Dyer D.W."/>
            <person name="Iandolo J.J."/>
        </authorList>
    </citation>
    <scope>NUCLEOTIDE SEQUENCE [LARGE SCALE GENOMIC DNA]</scope>
    <source>
        <strain>NCTC 8325 / PS 47</strain>
    </source>
</reference>